<accession>A5IQH9</accession>
<feature type="chain" id="PRO_0000372213" description="Putative antiporter subunit mnhE2">
    <location>
        <begin position="1"/>
        <end position="160"/>
    </location>
</feature>
<feature type="transmembrane region" description="Helical" evidence="2">
    <location>
        <begin position="22"/>
        <end position="42"/>
    </location>
</feature>
<feature type="transmembrane region" description="Helical" evidence="2">
    <location>
        <begin position="55"/>
        <end position="75"/>
    </location>
</feature>
<feature type="transmembrane region" description="Helical" evidence="2">
    <location>
        <begin position="100"/>
        <end position="120"/>
    </location>
</feature>
<protein>
    <recommendedName>
        <fullName>Putative antiporter subunit mnhE2</fullName>
    </recommendedName>
    <alternativeName>
        <fullName>Mrp complex subunit E2</fullName>
    </alternativeName>
    <alternativeName>
        <fullName>Putative NADH-ubiquinone oxidoreductase subunit mnhE2</fullName>
    </alternativeName>
</protein>
<proteinExistence type="inferred from homology"/>
<name>MNHE2_STAA9</name>
<sequence length="160" mass="18835">MNQIVLNIIIAFLWVLFQDEDHFKFSTFFSGYLIGLIVIYILHRFFSDDFYVRKIWVAIKFLGVYLYQLITSSISTINYILFKTKDMNPGLLSYETRLTSDWAITFLTILIIITPGSTVIRISQDSKKFFIHSIDVSEKEKDSLLRSIKHYEDLILEVSR</sequence>
<evidence type="ECO:0000250" key="1"/>
<evidence type="ECO:0000255" key="2"/>
<evidence type="ECO:0000305" key="3"/>
<comment type="subunit">
    <text evidence="1">May form a heterooligomeric complex that consists of seven subunits: mnhA2, mnhB2, mnhC2, mnhD2, mnhE2, mnhF2 and mnhG2.</text>
</comment>
<comment type="subcellular location">
    <subcellularLocation>
        <location evidence="3">Cell membrane</location>
        <topology evidence="3">Multi-pass membrane protein</topology>
    </subcellularLocation>
</comment>
<comment type="similarity">
    <text evidence="3">Belongs to the CPA3 antiporters (TC 2.A.63) subunit E family.</text>
</comment>
<reference key="1">
    <citation type="submission" date="2007-05" db="EMBL/GenBank/DDBJ databases">
        <title>Complete sequence of chromosome of Staphylococcus aureus subsp. aureus JH9.</title>
        <authorList>
            <consortium name="US DOE Joint Genome Institute"/>
            <person name="Copeland A."/>
            <person name="Lucas S."/>
            <person name="Lapidus A."/>
            <person name="Barry K."/>
            <person name="Detter J.C."/>
            <person name="Glavina del Rio T."/>
            <person name="Hammon N."/>
            <person name="Israni S."/>
            <person name="Pitluck S."/>
            <person name="Chain P."/>
            <person name="Malfatti S."/>
            <person name="Shin M."/>
            <person name="Vergez L."/>
            <person name="Schmutz J."/>
            <person name="Larimer F."/>
            <person name="Land M."/>
            <person name="Hauser L."/>
            <person name="Kyrpides N."/>
            <person name="Kim E."/>
            <person name="Tomasz A."/>
            <person name="Richardson P."/>
        </authorList>
    </citation>
    <scope>NUCLEOTIDE SEQUENCE [LARGE SCALE GENOMIC DNA]</scope>
    <source>
        <strain>JH9</strain>
    </source>
</reference>
<organism>
    <name type="scientific">Staphylococcus aureus (strain JH9)</name>
    <dbReference type="NCBI Taxonomy" id="359786"/>
    <lineage>
        <taxon>Bacteria</taxon>
        <taxon>Bacillati</taxon>
        <taxon>Bacillota</taxon>
        <taxon>Bacilli</taxon>
        <taxon>Bacillales</taxon>
        <taxon>Staphylococcaceae</taxon>
        <taxon>Staphylococcus</taxon>
    </lineage>
</organism>
<gene>
    <name type="primary">mnhE2</name>
    <name type="synonym">mrpE2</name>
    <name type="ordered locus">SaurJH9_0649</name>
</gene>
<keyword id="KW-0050">Antiport</keyword>
<keyword id="KW-1003">Cell membrane</keyword>
<keyword id="KW-0406">Ion transport</keyword>
<keyword id="KW-0472">Membrane</keyword>
<keyword id="KW-0812">Transmembrane</keyword>
<keyword id="KW-1133">Transmembrane helix</keyword>
<keyword id="KW-0813">Transport</keyword>
<dbReference type="EMBL" id="CP000703">
    <property type="protein sequence ID" value="ABQ48452.1"/>
    <property type="molecule type" value="Genomic_DNA"/>
</dbReference>
<dbReference type="RefSeq" id="WP_001071971.1">
    <property type="nucleotide sequence ID" value="NC_009487.1"/>
</dbReference>
<dbReference type="SMR" id="A5IQH9"/>
<dbReference type="KEGG" id="saj:SaurJH9_0649"/>
<dbReference type="HOGENOM" id="CLU_086615_3_2_9"/>
<dbReference type="GO" id="GO:0005886">
    <property type="term" value="C:plasma membrane"/>
    <property type="evidence" value="ECO:0007669"/>
    <property type="project" value="UniProtKB-SubCell"/>
</dbReference>
<dbReference type="GO" id="GO:0015297">
    <property type="term" value="F:antiporter activity"/>
    <property type="evidence" value="ECO:0007669"/>
    <property type="project" value="UniProtKB-KW"/>
</dbReference>
<dbReference type="GO" id="GO:0008324">
    <property type="term" value="F:monoatomic cation transmembrane transporter activity"/>
    <property type="evidence" value="ECO:0007669"/>
    <property type="project" value="InterPro"/>
</dbReference>
<dbReference type="InterPro" id="IPR002758">
    <property type="entry name" value="Cation_antiport_E"/>
</dbReference>
<dbReference type="NCBIfam" id="NF006517">
    <property type="entry name" value="PRK08965.1-1"/>
    <property type="match status" value="1"/>
</dbReference>
<dbReference type="PANTHER" id="PTHR34584">
    <property type="entry name" value="NA(+)/H(+) ANTIPORTER SUBUNIT E1"/>
    <property type="match status" value="1"/>
</dbReference>
<dbReference type="PANTHER" id="PTHR34584:SF1">
    <property type="entry name" value="NA(+)_H(+) ANTIPORTER SUBUNIT E1"/>
    <property type="match status" value="1"/>
</dbReference>
<dbReference type="Pfam" id="PF01899">
    <property type="entry name" value="MNHE"/>
    <property type="match status" value="1"/>
</dbReference>
<dbReference type="PIRSF" id="PIRSF019239">
    <property type="entry name" value="MrpE"/>
    <property type="match status" value="1"/>
</dbReference>